<organism>
    <name type="scientific">Listeria monocytogenes serovar 1/2a (strain ATCC BAA-679 / EGD-e)</name>
    <dbReference type="NCBI Taxonomy" id="169963"/>
    <lineage>
        <taxon>Bacteria</taxon>
        <taxon>Bacillati</taxon>
        <taxon>Bacillota</taxon>
        <taxon>Bacilli</taxon>
        <taxon>Bacillales</taxon>
        <taxon>Listeriaceae</taxon>
        <taxon>Listeria</taxon>
    </lineage>
</organism>
<feature type="chain" id="PRO_0000068181" description="UPF0309 protein lmo0025">
    <location>
        <begin position="1"/>
        <end position="234"/>
    </location>
</feature>
<feature type="domain" description="SIS" evidence="1">
    <location>
        <begin position="31"/>
        <end position="205"/>
    </location>
</feature>
<sequence length="234" mass="25363">MGLTFFDKARELTEELEKTQAESIHQAAKLVADSIMNDGIIQAFGSGHSYAAAIEVCGRAGGLIPSKVIMDPAGGYYESIEGVGSLLTHRLQAKPNDIFFLISNSGRNPMGIELAEWIKSQGCKLIVVTALDASQTAASRHSSGKLLYEFADVILDNRSVQGDAALELEGLEGKVCGTSSFSAVLLLQQTIYEAVELMLEKGYTPPVYRSANIDGGYEYNFAIEDKFADRIFHL</sequence>
<dbReference type="EMBL" id="AL591973">
    <property type="protein sequence ID" value="CAC98240.1"/>
    <property type="molecule type" value="Genomic_DNA"/>
</dbReference>
<dbReference type="PIR" id="AB1078">
    <property type="entry name" value="AB1078"/>
</dbReference>
<dbReference type="RefSeq" id="NP_463558.1">
    <property type="nucleotide sequence ID" value="NC_003210.1"/>
</dbReference>
<dbReference type="RefSeq" id="WP_003732177.1">
    <property type="nucleotide sequence ID" value="NZ_CP149495.1"/>
</dbReference>
<dbReference type="SMR" id="Q8YAT8"/>
<dbReference type="STRING" id="169963.gene:17592660"/>
<dbReference type="PaxDb" id="169963-lmo0025"/>
<dbReference type="EnsemblBacteria" id="CAC98240">
    <property type="protein sequence ID" value="CAC98240"/>
    <property type="gene ID" value="CAC98240"/>
</dbReference>
<dbReference type="GeneID" id="985061"/>
<dbReference type="KEGG" id="lmo:lmo0025"/>
<dbReference type="PATRIC" id="fig|169963.11.peg.26"/>
<dbReference type="eggNOG" id="COG4821">
    <property type="taxonomic scope" value="Bacteria"/>
</dbReference>
<dbReference type="HOGENOM" id="CLU_089975_1_0_9"/>
<dbReference type="OrthoDB" id="9805185at2"/>
<dbReference type="PhylomeDB" id="Q8YAT8"/>
<dbReference type="BioCyc" id="LMON169963:LMO0025-MONOMER"/>
<dbReference type="Proteomes" id="UP000000817">
    <property type="component" value="Chromosome"/>
</dbReference>
<dbReference type="GO" id="GO:0005829">
    <property type="term" value="C:cytosol"/>
    <property type="evidence" value="ECO:0000318"/>
    <property type="project" value="GO_Central"/>
</dbReference>
<dbReference type="GO" id="GO:0097367">
    <property type="term" value="F:carbohydrate derivative binding"/>
    <property type="evidence" value="ECO:0007669"/>
    <property type="project" value="InterPro"/>
</dbReference>
<dbReference type="GO" id="GO:0008968">
    <property type="term" value="F:D-sedoheptulose 7-phosphate isomerase activity"/>
    <property type="evidence" value="ECO:0000318"/>
    <property type="project" value="GO_Central"/>
</dbReference>
<dbReference type="GO" id="GO:2001061">
    <property type="term" value="P:D-glycero-D-manno-heptose 7-phosphate biosynthetic process"/>
    <property type="evidence" value="ECO:0000318"/>
    <property type="project" value="GO_Central"/>
</dbReference>
<dbReference type="CDD" id="cd05013">
    <property type="entry name" value="SIS_RpiR"/>
    <property type="match status" value="1"/>
</dbReference>
<dbReference type="Gene3D" id="3.40.50.10490">
    <property type="entry name" value="Glucose-6-phosphate isomerase like protein, domain 1"/>
    <property type="match status" value="1"/>
</dbReference>
<dbReference type="HAMAP" id="MF_01240">
    <property type="entry name" value="UPF0309"/>
    <property type="match status" value="1"/>
</dbReference>
<dbReference type="InterPro" id="IPR035472">
    <property type="entry name" value="RpiR-like_SIS"/>
</dbReference>
<dbReference type="InterPro" id="IPR001347">
    <property type="entry name" value="SIS_dom"/>
</dbReference>
<dbReference type="InterPro" id="IPR046348">
    <property type="entry name" value="SIS_dom_sf"/>
</dbReference>
<dbReference type="InterPro" id="IPR050099">
    <property type="entry name" value="SIS_GmhA/DiaA_subfam"/>
</dbReference>
<dbReference type="InterPro" id="IPR022951">
    <property type="entry name" value="UPF0309"/>
</dbReference>
<dbReference type="NCBIfam" id="NF002805">
    <property type="entry name" value="PRK02947.1"/>
    <property type="match status" value="1"/>
</dbReference>
<dbReference type="PANTHER" id="PTHR30390:SF7">
    <property type="entry name" value="PHOSPHOHEPTOSE ISOMERASE"/>
    <property type="match status" value="1"/>
</dbReference>
<dbReference type="PANTHER" id="PTHR30390">
    <property type="entry name" value="SEDOHEPTULOSE 7-PHOSPHATE ISOMERASE / DNAA INITIATOR-ASSOCIATING FACTOR FOR REPLICATION INITIATION"/>
    <property type="match status" value="1"/>
</dbReference>
<dbReference type="Pfam" id="PF13580">
    <property type="entry name" value="SIS_2"/>
    <property type="match status" value="1"/>
</dbReference>
<dbReference type="SUPFAM" id="SSF53697">
    <property type="entry name" value="SIS domain"/>
    <property type="match status" value="1"/>
</dbReference>
<dbReference type="PROSITE" id="PS51464">
    <property type="entry name" value="SIS"/>
    <property type="match status" value="1"/>
</dbReference>
<evidence type="ECO:0000255" key="1">
    <source>
        <dbReference type="HAMAP-Rule" id="MF_01240"/>
    </source>
</evidence>
<gene>
    <name type="ordered locus">lmo0025</name>
</gene>
<proteinExistence type="inferred from homology"/>
<protein>
    <recommendedName>
        <fullName evidence="1">UPF0309 protein lmo0025</fullName>
    </recommendedName>
</protein>
<accession>Q8YAT8</accession>
<name>Y025_LISMO</name>
<comment type="similarity">
    <text evidence="1">Belongs to the UPF0309 family.</text>
</comment>
<keyword id="KW-1185">Reference proteome</keyword>
<reference key="1">
    <citation type="journal article" date="2001" name="Science">
        <title>Comparative genomics of Listeria species.</title>
        <authorList>
            <person name="Glaser P."/>
            <person name="Frangeul L."/>
            <person name="Buchrieser C."/>
            <person name="Rusniok C."/>
            <person name="Amend A."/>
            <person name="Baquero F."/>
            <person name="Berche P."/>
            <person name="Bloecker H."/>
            <person name="Brandt P."/>
            <person name="Chakraborty T."/>
            <person name="Charbit A."/>
            <person name="Chetouani F."/>
            <person name="Couve E."/>
            <person name="de Daruvar A."/>
            <person name="Dehoux P."/>
            <person name="Domann E."/>
            <person name="Dominguez-Bernal G."/>
            <person name="Duchaud E."/>
            <person name="Durant L."/>
            <person name="Dussurget O."/>
            <person name="Entian K.-D."/>
            <person name="Fsihi H."/>
            <person name="Garcia-del Portillo F."/>
            <person name="Garrido P."/>
            <person name="Gautier L."/>
            <person name="Goebel W."/>
            <person name="Gomez-Lopez N."/>
            <person name="Hain T."/>
            <person name="Hauf J."/>
            <person name="Jackson D."/>
            <person name="Jones L.-M."/>
            <person name="Kaerst U."/>
            <person name="Kreft J."/>
            <person name="Kuhn M."/>
            <person name="Kunst F."/>
            <person name="Kurapkat G."/>
            <person name="Madueno E."/>
            <person name="Maitournam A."/>
            <person name="Mata Vicente J."/>
            <person name="Ng E."/>
            <person name="Nedjari H."/>
            <person name="Nordsiek G."/>
            <person name="Novella S."/>
            <person name="de Pablos B."/>
            <person name="Perez-Diaz J.-C."/>
            <person name="Purcell R."/>
            <person name="Remmel B."/>
            <person name="Rose M."/>
            <person name="Schlueter T."/>
            <person name="Simoes N."/>
            <person name="Tierrez A."/>
            <person name="Vazquez-Boland J.-A."/>
            <person name="Voss H."/>
            <person name="Wehland J."/>
            <person name="Cossart P."/>
        </authorList>
    </citation>
    <scope>NUCLEOTIDE SEQUENCE [LARGE SCALE GENOMIC DNA]</scope>
    <source>
        <strain>ATCC BAA-679 / EGD-e</strain>
    </source>
</reference>